<gene>
    <name evidence="1" type="primary">hutI</name>
    <name type="ordered locus">Adeh_1507</name>
</gene>
<name>HUTI_ANADE</name>
<protein>
    <recommendedName>
        <fullName evidence="1">Imidazolonepropionase</fullName>
        <ecNumber evidence="1">3.5.2.7</ecNumber>
    </recommendedName>
    <alternativeName>
        <fullName evidence="1">Imidazolone-5-propionate hydrolase</fullName>
    </alternativeName>
</protein>
<organism>
    <name type="scientific">Anaeromyxobacter dehalogenans (strain 2CP-C)</name>
    <dbReference type="NCBI Taxonomy" id="290397"/>
    <lineage>
        <taxon>Bacteria</taxon>
        <taxon>Pseudomonadati</taxon>
        <taxon>Myxococcota</taxon>
        <taxon>Myxococcia</taxon>
        <taxon>Myxococcales</taxon>
        <taxon>Cystobacterineae</taxon>
        <taxon>Anaeromyxobacteraceae</taxon>
        <taxon>Anaeromyxobacter</taxon>
    </lineage>
</organism>
<reference key="1">
    <citation type="submission" date="2006-01" db="EMBL/GenBank/DDBJ databases">
        <title>Complete sequence of Anaeromyxobacter dehalogenans 2CP-C.</title>
        <authorList>
            <person name="Copeland A."/>
            <person name="Lucas S."/>
            <person name="Lapidus A."/>
            <person name="Barry K."/>
            <person name="Detter J.C."/>
            <person name="Glavina T."/>
            <person name="Hammon N."/>
            <person name="Israni S."/>
            <person name="Pitluck S."/>
            <person name="Brettin T."/>
            <person name="Bruce D."/>
            <person name="Han C."/>
            <person name="Tapia R."/>
            <person name="Gilna P."/>
            <person name="Kiss H."/>
            <person name="Schmutz J."/>
            <person name="Larimer F."/>
            <person name="Land M."/>
            <person name="Kyrpides N."/>
            <person name="Anderson I."/>
            <person name="Sanford R.A."/>
            <person name="Ritalahti K.M."/>
            <person name="Thomas H.S."/>
            <person name="Kirby J.R."/>
            <person name="Zhulin I.B."/>
            <person name="Loeffler F.E."/>
            <person name="Richardson P."/>
        </authorList>
    </citation>
    <scope>NUCLEOTIDE SEQUENCE [LARGE SCALE GENOMIC DNA]</scope>
    <source>
        <strain>2CP-C</strain>
    </source>
</reference>
<keyword id="KW-0963">Cytoplasm</keyword>
<keyword id="KW-0369">Histidine metabolism</keyword>
<keyword id="KW-0378">Hydrolase</keyword>
<keyword id="KW-0408">Iron</keyword>
<keyword id="KW-0479">Metal-binding</keyword>
<keyword id="KW-1185">Reference proteome</keyword>
<keyword id="KW-0862">Zinc</keyword>
<feature type="chain" id="PRO_0000306424" description="Imidazolonepropionase">
    <location>
        <begin position="1"/>
        <end position="421"/>
    </location>
</feature>
<feature type="binding site" evidence="1">
    <location>
        <position position="76"/>
    </location>
    <ligand>
        <name>Fe(3+)</name>
        <dbReference type="ChEBI" id="CHEBI:29034"/>
    </ligand>
</feature>
<feature type="binding site" evidence="1">
    <location>
        <position position="76"/>
    </location>
    <ligand>
        <name>Zn(2+)</name>
        <dbReference type="ChEBI" id="CHEBI:29105"/>
    </ligand>
</feature>
<feature type="binding site" evidence="1">
    <location>
        <position position="78"/>
    </location>
    <ligand>
        <name>Fe(3+)</name>
        <dbReference type="ChEBI" id="CHEBI:29034"/>
    </ligand>
</feature>
<feature type="binding site" evidence="1">
    <location>
        <position position="78"/>
    </location>
    <ligand>
        <name>Zn(2+)</name>
        <dbReference type="ChEBI" id="CHEBI:29105"/>
    </ligand>
</feature>
<feature type="binding site" evidence="1">
    <location>
        <position position="85"/>
    </location>
    <ligand>
        <name>4-imidazolone-5-propanoate</name>
        <dbReference type="ChEBI" id="CHEBI:77893"/>
    </ligand>
</feature>
<feature type="binding site" evidence="1">
    <location>
        <position position="148"/>
    </location>
    <ligand>
        <name>4-imidazolone-5-propanoate</name>
        <dbReference type="ChEBI" id="CHEBI:77893"/>
    </ligand>
</feature>
<feature type="binding site" evidence="1">
    <location>
        <position position="148"/>
    </location>
    <ligand>
        <name>N-formimidoyl-L-glutamate</name>
        <dbReference type="ChEBI" id="CHEBI:58928"/>
    </ligand>
</feature>
<feature type="binding site" evidence="1">
    <location>
        <position position="182"/>
    </location>
    <ligand>
        <name>4-imidazolone-5-propanoate</name>
        <dbReference type="ChEBI" id="CHEBI:77893"/>
    </ligand>
</feature>
<feature type="binding site" evidence="1">
    <location>
        <position position="247"/>
    </location>
    <ligand>
        <name>Fe(3+)</name>
        <dbReference type="ChEBI" id="CHEBI:29034"/>
    </ligand>
</feature>
<feature type="binding site" evidence="1">
    <location>
        <position position="247"/>
    </location>
    <ligand>
        <name>Zn(2+)</name>
        <dbReference type="ChEBI" id="CHEBI:29105"/>
    </ligand>
</feature>
<feature type="binding site" evidence="1">
    <location>
        <position position="250"/>
    </location>
    <ligand>
        <name>4-imidazolone-5-propanoate</name>
        <dbReference type="ChEBI" id="CHEBI:77893"/>
    </ligand>
</feature>
<feature type="binding site" evidence="1">
    <location>
        <position position="324"/>
    </location>
    <ligand>
        <name>N-formimidoyl-L-glutamate</name>
        <dbReference type="ChEBI" id="CHEBI:58928"/>
    </ligand>
</feature>
<feature type="binding site" evidence="1">
    <location>
        <position position="326"/>
    </location>
    <ligand>
        <name>N-formimidoyl-L-glutamate</name>
        <dbReference type="ChEBI" id="CHEBI:58928"/>
    </ligand>
</feature>
<feature type="binding site" evidence="1">
    <location>
        <position position="327"/>
    </location>
    <ligand>
        <name>4-imidazolone-5-propanoate</name>
        <dbReference type="ChEBI" id="CHEBI:77893"/>
    </ligand>
</feature>
<comment type="function">
    <text evidence="1">Catalyzes the hydrolytic cleavage of the carbon-nitrogen bond in imidazolone-5-propanoate to yield N-formimidoyl-L-glutamate. It is the third step in the universal histidine degradation pathway.</text>
</comment>
<comment type="catalytic activity">
    <reaction evidence="1">
        <text>4-imidazolone-5-propanoate + H2O = N-formimidoyl-L-glutamate</text>
        <dbReference type="Rhea" id="RHEA:23660"/>
        <dbReference type="ChEBI" id="CHEBI:15377"/>
        <dbReference type="ChEBI" id="CHEBI:58928"/>
        <dbReference type="ChEBI" id="CHEBI:77893"/>
        <dbReference type="EC" id="3.5.2.7"/>
    </reaction>
</comment>
<comment type="cofactor">
    <cofactor evidence="1">
        <name>Zn(2+)</name>
        <dbReference type="ChEBI" id="CHEBI:29105"/>
    </cofactor>
    <cofactor evidence="1">
        <name>Fe(3+)</name>
        <dbReference type="ChEBI" id="CHEBI:29034"/>
    </cofactor>
    <text evidence="1">Binds 1 zinc or iron ion per subunit.</text>
</comment>
<comment type="pathway">
    <text evidence="1">Amino-acid degradation; L-histidine degradation into L-glutamate; N-formimidoyl-L-glutamate from L-histidine: step 3/3.</text>
</comment>
<comment type="subcellular location">
    <subcellularLocation>
        <location evidence="1">Cytoplasm</location>
    </subcellularLocation>
</comment>
<comment type="similarity">
    <text evidence="1">Belongs to the metallo-dependent hydrolases superfamily. HutI family.</text>
</comment>
<evidence type="ECO:0000255" key="1">
    <source>
        <dbReference type="HAMAP-Rule" id="MF_00372"/>
    </source>
</evidence>
<sequence length="421" mass="43894">MSRPAATLVLRNAVVATCDRGPSDAGLLPGAAVAVEGRRVAWVGRERDVEAEVNLAGAQVIDARGGLVTPGLVDSHTHLVFAGERAGEFALRCAGRTYLQVALSGGGIAVTTRETRAAPDEQLLAAAAARARRLIAQGVTTLEVKSGYGLDAPEELRLLRIVHQLGRALGGDATILPTLLFHAVPPEQVGDRAGFVRDACASLIPQVARERLAQFCDVFVEDGAFAPDEARLLLQAAKDRGLVPRVHAEQLTAGGGARLAAELGCSSADHLEELDDAGIAALAQARVVAGLLPLSTLFLGSERYAPARRLLEAGVPVSLATNMNPGSAMSENVGLTLSLACLKLRLTPAEALVAFTAGGARALRQPDLGRVARGADADLVLWGCGSPEHLAWHMAVNHALVVVKHGRVVHEAPPAAMVDCR</sequence>
<dbReference type="EC" id="3.5.2.7" evidence="1"/>
<dbReference type="EMBL" id="CP000251">
    <property type="protein sequence ID" value="ABC81280.1"/>
    <property type="molecule type" value="Genomic_DNA"/>
</dbReference>
<dbReference type="RefSeq" id="WP_011420563.1">
    <property type="nucleotide sequence ID" value="NC_007760.1"/>
</dbReference>
<dbReference type="SMR" id="Q2IHZ6"/>
<dbReference type="STRING" id="290397.Adeh_1507"/>
<dbReference type="KEGG" id="ade:Adeh_1507"/>
<dbReference type="eggNOG" id="COG1228">
    <property type="taxonomic scope" value="Bacteria"/>
</dbReference>
<dbReference type="HOGENOM" id="CLU_041647_0_1_7"/>
<dbReference type="OrthoDB" id="9807210at2"/>
<dbReference type="UniPathway" id="UPA00379">
    <property type="reaction ID" value="UER00551"/>
</dbReference>
<dbReference type="Proteomes" id="UP000001935">
    <property type="component" value="Chromosome"/>
</dbReference>
<dbReference type="GO" id="GO:0005737">
    <property type="term" value="C:cytoplasm"/>
    <property type="evidence" value="ECO:0007669"/>
    <property type="project" value="UniProtKB-SubCell"/>
</dbReference>
<dbReference type="GO" id="GO:0050480">
    <property type="term" value="F:imidazolonepropionase activity"/>
    <property type="evidence" value="ECO:0007669"/>
    <property type="project" value="UniProtKB-UniRule"/>
</dbReference>
<dbReference type="GO" id="GO:0005506">
    <property type="term" value="F:iron ion binding"/>
    <property type="evidence" value="ECO:0007669"/>
    <property type="project" value="UniProtKB-UniRule"/>
</dbReference>
<dbReference type="GO" id="GO:0008270">
    <property type="term" value="F:zinc ion binding"/>
    <property type="evidence" value="ECO:0007669"/>
    <property type="project" value="UniProtKB-UniRule"/>
</dbReference>
<dbReference type="GO" id="GO:0019556">
    <property type="term" value="P:L-histidine catabolic process to glutamate and formamide"/>
    <property type="evidence" value="ECO:0007669"/>
    <property type="project" value="UniProtKB-UniPathway"/>
</dbReference>
<dbReference type="GO" id="GO:0019557">
    <property type="term" value="P:L-histidine catabolic process to glutamate and formate"/>
    <property type="evidence" value="ECO:0007669"/>
    <property type="project" value="UniProtKB-UniPathway"/>
</dbReference>
<dbReference type="Gene3D" id="3.20.20.140">
    <property type="entry name" value="Metal-dependent hydrolases"/>
    <property type="match status" value="1"/>
</dbReference>
<dbReference type="Gene3D" id="2.30.40.10">
    <property type="entry name" value="Urease, subunit C, domain 1"/>
    <property type="match status" value="1"/>
</dbReference>
<dbReference type="HAMAP" id="MF_00372">
    <property type="entry name" value="HutI"/>
    <property type="match status" value="1"/>
</dbReference>
<dbReference type="InterPro" id="IPR006680">
    <property type="entry name" value="Amidohydro-rel"/>
</dbReference>
<dbReference type="InterPro" id="IPR005920">
    <property type="entry name" value="HutI"/>
</dbReference>
<dbReference type="InterPro" id="IPR011059">
    <property type="entry name" value="Metal-dep_hydrolase_composite"/>
</dbReference>
<dbReference type="InterPro" id="IPR032466">
    <property type="entry name" value="Metal_Hydrolase"/>
</dbReference>
<dbReference type="NCBIfam" id="TIGR01224">
    <property type="entry name" value="hutI"/>
    <property type="match status" value="1"/>
</dbReference>
<dbReference type="PANTHER" id="PTHR42752">
    <property type="entry name" value="IMIDAZOLONEPROPIONASE"/>
    <property type="match status" value="1"/>
</dbReference>
<dbReference type="PANTHER" id="PTHR42752:SF1">
    <property type="entry name" value="IMIDAZOLONEPROPIONASE-RELATED"/>
    <property type="match status" value="1"/>
</dbReference>
<dbReference type="Pfam" id="PF01979">
    <property type="entry name" value="Amidohydro_1"/>
    <property type="match status" value="1"/>
</dbReference>
<dbReference type="SUPFAM" id="SSF51338">
    <property type="entry name" value="Composite domain of metallo-dependent hydrolases"/>
    <property type="match status" value="1"/>
</dbReference>
<dbReference type="SUPFAM" id="SSF51556">
    <property type="entry name" value="Metallo-dependent hydrolases"/>
    <property type="match status" value="1"/>
</dbReference>
<accession>Q2IHZ6</accession>
<proteinExistence type="inferred from homology"/>